<sequence length="551" mass="63533">MELANICNATIAKGIAVQKDSYGGYGVYIVDPGALVGCNDPKLGGDKIELLRVSSVFNVKNLMEAMNALEGEYAEDGQRAADMFKSIIGSSIEELSAVSETCLLVYFMMVIYLMGEQGYAVPMKISRYIDTVLLGTTVNNASNCIESMLIHYEHVALFHELDNNLQKLHKTLISKMPSKKNYSIELLRQIYSATVSRVLEIPQELHEENYMDNYVVTPSLVPILDYVNHGDKTSRNAYYDVDRRKGDIILYLDLTVVNPGKLKPNTEVLITYKDIEDSLAMITKYGFDPANYTTTGTKIFSCTFDKMYLSTNKFDNEIDIRNFYQWFSINPSLQFVLNSENEWLINDSLAEFERLLVPFATSSQRNEHYWIYSDGDDARKRFMEYFDIDEVEDEDEAWAQLETQFKWFESSENDLMPFPPCVWTVKSKFLKEKEATGYELEKVIQNKLENSRALYNETTNQFQAYLENYLDYRIDVLQEYSPEDTENENAVSQLIARELSVLLKIRDRINNNKSIFLNSEDKKYAKLPLLPTKNVERPPWLSEGDDDFDQD</sequence>
<comment type="function">
    <text evidence="1">Methyltransferase which mediates trimethylation of cytochrome c (CYC1).</text>
</comment>
<comment type="catalytic activity">
    <reaction evidence="3">
        <text>L-lysyl-[cytochrome c] + S-adenosyl-L-methionine = N(6)-methyl-L-lysyl-[cytochrome c] + S-adenosyl-L-homocysteine + H(+)</text>
        <dbReference type="Rhea" id="RHEA:24312"/>
        <dbReference type="Rhea" id="RHEA-COMP:9754"/>
        <dbReference type="Rhea" id="RHEA-COMP:9755"/>
        <dbReference type="ChEBI" id="CHEBI:15378"/>
        <dbReference type="ChEBI" id="CHEBI:29969"/>
        <dbReference type="ChEBI" id="CHEBI:57856"/>
        <dbReference type="ChEBI" id="CHEBI:59789"/>
        <dbReference type="ChEBI" id="CHEBI:61929"/>
        <dbReference type="EC" id="2.1.1.59"/>
    </reaction>
</comment>
<comment type="subcellular location">
    <subcellularLocation>
        <location evidence="1">Cytoplasm</location>
        <location evidence="1">Cytosol</location>
    </subcellularLocation>
</comment>
<comment type="domain">
    <text evidence="1">The SET-like region, although related with the SET domain is not detected by any prediction method.</text>
</comment>
<comment type="similarity">
    <text evidence="2 3">Belongs to the class V-like SAM-binding methyltransferase superfamily.</text>
</comment>
<organism>
    <name type="scientific">Candida glabrata (strain ATCC 2001 / BCRC 20586 / JCM 3761 / NBRC 0622 / NRRL Y-65 / CBS 138)</name>
    <name type="common">Yeast</name>
    <name type="synonym">Nakaseomyces glabratus</name>
    <dbReference type="NCBI Taxonomy" id="284593"/>
    <lineage>
        <taxon>Eukaryota</taxon>
        <taxon>Fungi</taxon>
        <taxon>Dikarya</taxon>
        <taxon>Ascomycota</taxon>
        <taxon>Saccharomycotina</taxon>
        <taxon>Saccharomycetes</taxon>
        <taxon>Saccharomycetales</taxon>
        <taxon>Saccharomycetaceae</taxon>
        <taxon>Nakaseomyces</taxon>
    </lineage>
</organism>
<gene>
    <name type="primary">CTM1</name>
    <name type="ordered locus">CAGL0I01210g</name>
</gene>
<evidence type="ECO:0000250" key="1"/>
<evidence type="ECO:0000255" key="2">
    <source>
        <dbReference type="PROSITE-ProRule" id="PRU00190"/>
    </source>
</evidence>
<evidence type="ECO:0000255" key="3">
    <source>
        <dbReference type="PROSITE-ProRule" id="PRU00943"/>
    </source>
</evidence>
<proteinExistence type="inferred from homology"/>
<reference key="1">
    <citation type="journal article" date="2004" name="Nature">
        <title>Genome evolution in yeasts.</title>
        <authorList>
            <person name="Dujon B."/>
            <person name="Sherman D."/>
            <person name="Fischer G."/>
            <person name="Durrens P."/>
            <person name="Casaregola S."/>
            <person name="Lafontaine I."/>
            <person name="de Montigny J."/>
            <person name="Marck C."/>
            <person name="Neuveglise C."/>
            <person name="Talla E."/>
            <person name="Goffard N."/>
            <person name="Frangeul L."/>
            <person name="Aigle M."/>
            <person name="Anthouard V."/>
            <person name="Babour A."/>
            <person name="Barbe V."/>
            <person name="Barnay S."/>
            <person name="Blanchin S."/>
            <person name="Beckerich J.-M."/>
            <person name="Beyne E."/>
            <person name="Bleykasten C."/>
            <person name="Boisrame A."/>
            <person name="Boyer J."/>
            <person name="Cattolico L."/>
            <person name="Confanioleri F."/>
            <person name="de Daruvar A."/>
            <person name="Despons L."/>
            <person name="Fabre E."/>
            <person name="Fairhead C."/>
            <person name="Ferry-Dumazet H."/>
            <person name="Groppi A."/>
            <person name="Hantraye F."/>
            <person name="Hennequin C."/>
            <person name="Jauniaux N."/>
            <person name="Joyet P."/>
            <person name="Kachouri R."/>
            <person name="Kerrest A."/>
            <person name="Koszul R."/>
            <person name="Lemaire M."/>
            <person name="Lesur I."/>
            <person name="Ma L."/>
            <person name="Muller H."/>
            <person name="Nicaud J.-M."/>
            <person name="Nikolski M."/>
            <person name="Oztas S."/>
            <person name="Ozier-Kalogeropoulos O."/>
            <person name="Pellenz S."/>
            <person name="Potier S."/>
            <person name="Richard G.-F."/>
            <person name="Straub M.-L."/>
            <person name="Suleau A."/>
            <person name="Swennen D."/>
            <person name="Tekaia F."/>
            <person name="Wesolowski-Louvel M."/>
            <person name="Westhof E."/>
            <person name="Wirth B."/>
            <person name="Zeniou-Meyer M."/>
            <person name="Zivanovic Y."/>
            <person name="Bolotin-Fukuhara M."/>
            <person name="Thierry A."/>
            <person name="Bouchier C."/>
            <person name="Caudron B."/>
            <person name="Scarpelli C."/>
            <person name="Gaillardin C."/>
            <person name="Weissenbach J."/>
            <person name="Wincker P."/>
            <person name="Souciet J.-L."/>
        </authorList>
    </citation>
    <scope>NUCLEOTIDE SEQUENCE [LARGE SCALE GENOMIC DNA]</scope>
    <source>
        <strain>ATCC 2001 / BCRC 20586 / JCM 3761 / NBRC 0622 / NRRL Y-65 / CBS 138</strain>
    </source>
</reference>
<name>CTM1_CANGA</name>
<dbReference type="EC" id="2.1.1.59"/>
<dbReference type="EMBL" id="CR380955">
    <property type="protein sequence ID" value="CAG60244.1"/>
    <property type="molecule type" value="Genomic_DNA"/>
</dbReference>
<dbReference type="RefSeq" id="XP_447307.1">
    <property type="nucleotide sequence ID" value="XM_447307.1"/>
</dbReference>
<dbReference type="FunCoup" id="Q6FR37">
    <property type="interactions" value="72"/>
</dbReference>
<dbReference type="STRING" id="284593.Q6FR37"/>
<dbReference type="EnsemblFungi" id="CAGL0I01210g-T">
    <property type="protein sequence ID" value="CAGL0I01210g-T-p1"/>
    <property type="gene ID" value="CAGL0I01210g"/>
</dbReference>
<dbReference type="KEGG" id="cgr:2889115"/>
<dbReference type="CGD" id="CAL0132300">
    <property type="gene designation" value="CAGL0I01210g"/>
</dbReference>
<dbReference type="VEuPathDB" id="FungiDB:CAGL0I01210g"/>
<dbReference type="eggNOG" id="ENOG502RXKP">
    <property type="taxonomic scope" value="Eukaryota"/>
</dbReference>
<dbReference type="HOGENOM" id="CLU_026942_0_0_1"/>
<dbReference type="InParanoid" id="Q6FR37"/>
<dbReference type="OMA" id="NEHALMI"/>
<dbReference type="Proteomes" id="UP000002428">
    <property type="component" value="Chromosome I"/>
</dbReference>
<dbReference type="GO" id="GO:0005829">
    <property type="term" value="C:cytosol"/>
    <property type="evidence" value="ECO:0007669"/>
    <property type="project" value="UniProtKB-SubCell"/>
</dbReference>
<dbReference type="GO" id="GO:0000277">
    <property type="term" value="F:[cytochrome c]-lysine N-methyltransferase activity"/>
    <property type="evidence" value="ECO:0007669"/>
    <property type="project" value="UniProtKB-EC"/>
</dbReference>
<dbReference type="GO" id="GO:0032259">
    <property type="term" value="P:methylation"/>
    <property type="evidence" value="ECO:0007669"/>
    <property type="project" value="UniProtKB-KW"/>
</dbReference>
<dbReference type="Gene3D" id="3.90.1410.10">
    <property type="entry name" value="set domain protein methyltransferase, domain 1"/>
    <property type="match status" value="1"/>
</dbReference>
<dbReference type="InterPro" id="IPR025815">
    <property type="entry name" value="Ctm1"/>
</dbReference>
<dbReference type="InterPro" id="IPR001214">
    <property type="entry name" value="SET_dom"/>
</dbReference>
<dbReference type="InterPro" id="IPR046341">
    <property type="entry name" value="SET_dom_sf"/>
</dbReference>
<dbReference type="SUPFAM" id="SSF82199">
    <property type="entry name" value="SET domain"/>
    <property type="match status" value="1"/>
</dbReference>
<dbReference type="PROSITE" id="PS51611">
    <property type="entry name" value="SAM_MT59"/>
    <property type="match status" value="1"/>
</dbReference>
<dbReference type="PROSITE" id="PS50280">
    <property type="entry name" value="SET"/>
    <property type="match status" value="1"/>
</dbReference>
<keyword id="KW-0963">Cytoplasm</keyword>
<keyword id="KW-0489">Methyltransferase</keyword>
<keyword id="KW-1185">Reference proteome</keyword>
<keyword id="KW-0949">S-adenosyl-L-methionine</keyword>
<keyword id="KW-0808">Transferase</keyword>
<feature type="chain" id="PRO_0000228982" description="Cytochrome c lysine N-methyltransferase 1">
    <location>
        <begin position="1"/>
        <end position="551"/>
    </location>
</feature>
<feature type="domain" description="SET" evidence="2">
    <location>
        <begin position="46"/>
        <end position="273"/>
    </location>
</feature>
<feature type="region of interest" description="SET-like">
    <location>
        <begin position="184"/>
        <end position="288"/>
    </location>
</feature>
<protein>
    <recommendedName>
        <fullName>Cytochrome c lysine N-methyltransferase 1</fullName>
        <ecNumber>2.1.1.59</ecNumber>
    </recommendedName>
</protein>
<accession>Q6FR37</accession>